<proteinExistence type="inferred from homology"/>
<accession>Q72HB4</accession>
<reference key="1">
    <citation type="journal article" date="2004" name="Nat. Biotechnol.">
        <title>The genome sequence of the extreme thermophile Thermus thermophilus.</title>
        <authorList>
            <person name="Henne A."/>
            <person name="Brueggemann H."/>
            <person name="Raasch C."/>
            <person name="Wiezer A."/>
            <person name="Hartsch T."/>
            <person name="Liesegang H."/>
            <person name="Johann A."/>
            <person name="Lienard T."/>
            <person name="Gohl O."/>
            <person name="Martinez-Arias R."/>
            <person name="Jacobi C."/>
            <person name="Starkuviene V."/>
            <person name="Schlenczeck S."/>
            <person name="Dencker S."/>
            <person name="Huber R."/>
            <person name="Klenk H.-P."/>
            <person name="Kramer W."/>
            <person name="Merkl R."/>
            <person name="Gottschalk G."/>
            <person name="Fritz H.-J."/>
        </authorList>
    </citation>
    <scope>NUCLEOTIDE SEQUENCE [LARGE SCALE GENOMIC DNA]</scope>
    <source>
        <strain>ATCC BAA-163 / DSM 7039 / HB27</strain>
    </source>
</reference>
<feature type="chain" id="PRO_0000225852" description="UPF0145 protein TT_C1581">
    <location>
        <begin position="1"/>
        <end position="114"/>
    </location>
</feature>
<sequence length="114" mass="12289">MGVMEILVSTLEAVPGYRVAQVLGVVKGSTVRSKHLGKDLLAGLRTLVGGELPEYTEMLQEAREVAEARMLEEARRLGAHAVLGVRYATASVMQGAAEILVYGTAVRLEPARER</sequence>
<comment type="similarity">
    <text evidence="1">Belongs to the UPF0145 family.</text>
</comment>
<organism>
    <name type="scientific">Thermus thermophilus (strain ATCC BAA-163 / DSM 7039 / HB27)</name>
    <dbReference type="NCBI Taxonomy" id="262724"/>
    <lineage>
        <taxon>Bacteria</taxon>
        <taxon>Thermotogati</taxon>
        <taxon>Deinococcota</taxon>
        <taxon>Deinococci</taxon>
        <taxon>Thermales</taxon>
        <taxon>Thermaceae</taxon>
        <taxon>Thermus</taxon>
    </lineage>
</organism>
<name>YF81_THET2</name>
<evidence type="ECO:0000255" key="1">
    <source>
        <dbReference type="HAMAP-Rule" id="MF_00338"/>
    </source>
</evidence>
<gene>
    <name type="ordered locus">TT_C1581</name>
</gene>
<protein>
    <recommendedName>
        <fullName evidence="1">UPF0145 protein TT_C1581</fullName>
    </recommendedName>
</protein>
<dbReference type="EMBL" id="AE017221">
    <property type="protein sequence ID" value="AAS81923.1"/>
    <property type="molecule type" value="Genomic_DNA"/>
</dbReference>
<dbReference type="SMR" id="Q72HB4"/>
<dbReference type="KEGG" id="tth:TT_C1581"/>
<dbReference type="eggNOG" id="COG0393">
    <property type="taxonomic scope" value="Bacteria"/>
</dbReference>
<dbReference type="HOGENOM" id="CLU_117144_1_2_0"/>
<dbReference type="OrthoDB" id="9796448at2"/>
<dbReference type="Proteomes" id="UP000000592">
    <property type="component" value="Chromosome"/>
</dbReference>
<dbReference type="Gene3D" id="3.30.110.70">
    <property type="entry name" value="Hypothetical protein apc22750. Chain B"/>
    <property type="match status" value="1"/>
</dbReference>
<dbReference type="HAMAP" id="MF_00338">
    <property type="entry name" value="UPF0145"/>
    <property type="match status" value="1"/>
</dbReference>
<dbReference type="InterPro" id="IPR035439">
    <property type="entry name" value="UPF0145_dom_sf"/>
</dbReference>
<dbReference type="InterPro" id="IPR002765">
    <property type="entry name" value="UPF0145_YbjQ-like"/>
</dbReference>
<dbReference type="PANTHER" id="PTHR34068:SF2">
    <property type="entry name" value="UPF0145 PROTEIN SCO3412"/>
    <property type="match status" value="1"/>
</dbReference>
<dbReference type="PANTHER" id="PTHR34068">
    <property type="entry name" value="UPF0145 PROTEIN YBJQ"/>
    <property type="match status" value="1"/>
</dbReference>
<dbReference type="Pfam" id="PF01906">
    <property type="entry name" value="YbjQ_1"/>
    <property type="match status" value="1"/>
</dbReference>
<dbReference type="SUPFAM" id="SSF117782">
    <property type="entry name" value="YbjQ-like"/>
    <property type="match status" value="1"/>
</dbReference>